<feature type="chain" id="PRO_1000166191" description="Large ribosomal subunit protein bL25">
    <location>
        <begin position="1"/>
        <end position="94"/>
    </location>
</feature>
<reference key="1">
    <citation type="journal article" date="2009" name="PLoS Genet.">
        <title>Organised genome dynamics in the Escherichia coli species results in highly diverse adaptive paths.</title>
        <authorList>
            <person name="Touchon M."/>
            <person name="Hoede C."/>
            <person name="Tenaillon O."/>
            <person name="Barbe V."/>
            <person name="Baeriswyl S."/>
            <person name="Bidet P."/>
            <person name="Bingen E."/>
            <person name="Bonacorsi S."/>
            <person name="Bouchier C."/>
            <person name="Bouvet O."/>
            <person name="Calteau A."/>
            <person name="Chiapello H."/>
            <person name="Clermont O."/>
            <person name="Cruveiller S."/>
            <person name="Danchin A."/>
            <person name="Diard M."/>
            <person name="Dossat C."/>
            <person name="Karoui M.E."/>
            <person name="Frapy E."/>
            <person name="Garry L."/>
            <person name="Ghigo J.M."/>
            <person name="Gilles A.M."/>
            <person name="Johnson J."/>
            <person name="Le Bouguenec C."/>
            <person name="Lescat M."/>
            <person name="Mangenot S."/>
            <person name="Martinez-Jehanne V."/>
            <person name="Matic I."/>
            <person name="Nassif X."/>
            <person name="Oztas S."/>
            <person name="Petit M.A."/>
            <person name="Pichon C."/>
            <person name="Rouy Z."/>
            <person name="Ruf C.S."/>
            <person name="Schneider D."/>
            <person name="Tourret J."/>
            <person name="Vacherie B."/>
            <person name="Vallenet D."/>
            <person name="Medigue C."/>
            <person name="Rocha E.P.C."/>
            <person name="Denamur E."/>
        </authorList>
    </citation>
    <scope>NUCLEOTIDE SEQUENCE [LARGE SCALE GENOMIC DNA]</scope>
    <source>
        <strain>55989 / EAEC</strain>
    </source>
</reference>
<comment type="function">
    <text evidence="1">This is one of the proteins that binds to the 5S RNA in the ribosome where it forms part of the central protuberance.</text>
</comment>
<comment type="subunit">
    <text evidence="1">Part of the 50S ribosomal subunit; part of the 5S rRNA/L5/L18/L25 subcomplex. Contacts the 5S rRNA. Binds to the 5S rRNA independently of L5 and L18.</text>
</comment>
<comment type="similarity">
    <text evidence="1">Belongs to the bacterial ribosomal protein bL25 family.</text>
</comment>
<keyword id="KW-1185">Reference proteome</keyword>
<keyword id="KW-0687">Ribonucleoprotein</keyword>
<keyword id="KW-0689">Ribosomal protein</keyword>
<keyword id="KW-0694">RNA-binding</keyword>
<keyword id="KW-0699">rRNA-binding</keyword>
<gene>
    <name evidence="1" type="primary">rplY</name>
    <name type="ordered locus">EC55989_2439</name>
</gene>
<dbReference type="EMBL" id="CU928145">
    <property type="protein sequence ID" value="CAU98309.1"/>
    <property type="molecule type" value="Genomic_DNA"/>
</dbReference>
<dbReference type="RefSeq" id="WP_000494183.1">
    <property type="nucleotide sequence ID" value="NC_011748.1"/>
</dbReference>
<dbReference type="EMDB" id="EMD-8826"/>
<dbReference type="EMDB" id="EMD-8829"/>
<dbReference type="SMR" id="B7LAK9"/>
<dbReference type="GeneID" id="93774996"/>
<dbReference type="KEGG" id="eck:EC55989_2439"/>
<dbReference type="HOGENOM" id="CLU_137946_0_0_6"/>
<dbReference type="Proteomes" id="UP000000746">
    <property type="component" value="Chromosome"/>
</dbReference>
<dbReference type="GO" id="GO:0022625">
    <property type="term" value="C:cytosolic large ribosomal subunit"/>
    <property type="evidence" value="ECO:0007669"/>
    <property type="project" value="TreeGrafter"/>
</dbReference>
<dbReference type="GO" id="GO:0008097">
    <property type="term" value="F:5S rRNA binding"/>
    <property type="evidence" value="ECO:0007669"/>
    <property type="project" value="InterPro"/>
</dbReference>
<dbReference type="GO" id="GO:0003735">
    <property type="term" value="F:structural constituent of ribosome"/>
    <property type="evidence" value="ECO:0007669"/>
    <property type="project" value="InterPro"/>
</dbReference>
<dbReference type="GO" id="GO:0006412">
    <property type="term" value="P:translation"/>
    <property type="evidence" value="ECO:0007669"/>
    <property type="project" value="UniProtKB-UniRule"/>
</dbReference>
<dbReference type="CDD" id="cd00495">
    <property type="entry name" value="Ribosomal_L25_TL5_CTC"/>
    <property type="match status" value="1"/>
</dbReference>
<dbReference type="FunFam" id="2.40.240.10:FF:000002">
    <property type="entry name" value="50S ribosomal protein L25"/>
    <property type="match status" value="1"/>
</dbReference>
<dbReference type="Gene3D" id="2.40.240.10">
    <property type="entry name" value="Ribosomal Protein L25, Chain P"/>
    <property type="match status" value="1"/>
</dbReference>
<dbReference type="HAMAP" id="MF_01336">
    <property type="entry name" value="Ribosomal_bL25"/>
    <property type="match status" value="1"/>
</dbReference>
<dbReference type="InterPro" id="IPR020056">
    <property type="entry name" value="Rbsml_bL25/Gln-tRNA_synth_N"/>
</dbReference>
<dbReference type="InterPro" id="IPR011035">
    <property type="entry name" value="Ribosomal_bL25/Gln-tRNA_synth"/>
</dbReference>
<dbReference type="InterPro" id="IPR020055">
    <property type="entry name" value="Ribosomal_bL25_short"/>
</dbReference>
<dbReference type="InterPro" id="IPR029751">
    <property type="entry name" value="Ribosomal_L25_dom"/>
</dbReference>
<dbReference type="InterPro" id="IPR020930">
    <property type="entry name" value="Ribosomal_uL5_bac-type"/>
</dbReference>
<dbReference type="NCBIfam" id="NF004612">
    <property type="entry name" value="PRK05943.1"/>
    <property type="match status" value="1"/>
</dbReference>
<dbReference type="PANTHER" id="PTHR33284">
    <property type="entry name" value="RIBOSOMAL PROTEIN L25/GLN-TRNA SYNTHETASE, ANTI-CODON-BINDING DOMAIN-CONTAINING PROTEIN"/>
    <property type="match status" value="1"/>
</dbReference>
<dbReference type="PANTHER" id="PTHR33284:SF1">
    <property type="entry name" value="RIBOSOMAL PROTEIN L25_GLN-TRNA SYNTHETASE, ANTI-CODON-BINDING DOMAIN-CONTAINING PROTEIN"/>
    <property type="match status" value="1"/>
</dbReference>
<dbReference type="Pfam" id="PF01386">
    <property type="entry name" value="Ribosomal_L25p"/>
    <property type="match status" value="1"/>
</dbReference>
<dbReference type="SUPFAM" id="SSF50715">
    <property type="entry name" value="Ribosomal protein L25-like"/>
    <property type="match status" value="1"/>
</dbReference>
<protein>
    <recommendedName>
        <fullName evidence="1">Large ribosomal subunit protein bL25</fullName>
    </recommendedName>
    <alternativeName>
        <fullName evidence="2">50S ribosomal protein L25</fullName>
    </alternativeName>
</protein>
<evidence type="ECO:0000255" key="1">
    <source>
        <dbReference type="HAMAP-Rule" id="MF_01336"/>
    </source>
</evidence>
<evidence type="ECO:0000305" key="2"/>
<name>RL25_ECO55</name>
<accession>B7LAK9</accession>
<proteinExistence type="inferred from homology"/>
<organism>
    <name type="scientific">Escherichia coli (strain 55989 / EAEC)</name>
    <dbReference type="NCBI Taxonomy" id="585055"/>
    <lineage>
        <taxon>Bacteria</taxon>
        <taxon>Pseudomonadati</taxon>
        <taxon>Pseudomonadota</taxon>
        <taxon>Gammaproteobacteria</taxon>
        <taxon>Enterobacterales</taxon>
        <taxon>Enterobacteriaceae</taxon>
        <taxon>Escherichia</taxon>
    </lineage>
</organism>
<sequence>MFTINAEVRKEQGKGASRRLRAANKFPAIIYGGKEAPLAIELDHDKVMNMQAKAEFYSEVLTIVVDGKEIKVKAQDVQRHPYKPKLQHIDFVRA</sequence>